<comment type="function">
    <text evidence="2">Hydrolyzes N(G),N(G)-dimethyl-L-arginine (ADMA) and N(G)-monomethyl-L-arginine (MMA).</text>
</comment>
<comment type="catalytic activity">
    <reaction evidence="2">
        <text>N(omega),N(omega)-dimethyl-L-arginine + H2O = dimethylamine + L-citrulline</text>
        <dbReference type="Rhea" id="RHEA:17305"/>
        <dbReference type="ChEBI" id="CHEBI:15377"/>
        <dbReference type="ChEBI" id="CHEBI:57743"/>
        <dbReference type="ChEBI" id="CHEBI:58040"/>
        <dbReference type="ChEBI" id="CHEBI:58326"/>
        <dbReference type="EC" id="3.5.3.18"/>
    </reaction>
</comment>
<comment type="catalytic activity">
    <reaction evidence="2">
        <text>N(omega)-methyl-L-arginine + H2O = L-citrulline + methylamine</text>
        <dbReference type="Rhea" id="RHEA:25173"/>
        <dbReference type="ChEBI" id="CHEBI:15377"/>
        <dbReference type="ChEBI" id="CHEBI:57743"/>
        <dbReference type="ChEBI" id="CHEBI:59338"/>
        <dbReference type="ChEBI" id="CHEBI:114953"/>
        <dbReference type="EC" id="3.5.3.18"/>
    </reaction>
</comment>
<comment type="similarity">
    <text evidence="4">Belongs to the DDAH family.</text>
</comment>
<evidence type="ECO:0000250" key="1">
    <source>
        <dbReference type="UniProtKB" id="Q9I4E3"/>
    </source>
</evidence>
<evidence type="ECO:0000269" key="2">
    <source>
    </source>
</evidence>
<evidence type="ECO:0000303" key="3">
    <source>
    </source>
</evidence>
<evidence type="ECO:0000305" key="4"/>
<sequence>MPSKKALVRRPSPRLAEGLVTHVEREKVDHGLALEQWDAYVEALGAHGWETLEVDPADDCPDSVFVEDAVVVFRNVALITRPGAESRRAETAGVEEAVARLGCSVNWVWEPGTLDGGDVLKIGDTIYVGRGGRTNAAGVQQLRAAFEPLGARVVAVPVSKVLHLKSAVTALPDGTVIGHIPLTDVPSLFPRFLPVPEESGAHVVLLGGSRLLMAASAPKTAELLADLGHEPVLVDIGEFEKLEGCVTCLSVRLRELYD</sequence>
<reference key="1">
    <citation type="journal article" date="2002" name="Nature">
        <title>Complete genome sequence of the model actinomycete Streptomyces coelicolor A3(2).</title>
        <authorList>
            <person name="Bentley S.D."/>
            <person name="Chater K.F."/>
            <person name="Cerdeno-Tarraga A.-M."/>
            <person name="Challis G.L."/>
            <person name="Thomson N.R."/>
            <person name="James K.D."/>
            <person name="Harris D.E."/>
            <person name="Quail M.A."/>
            <person name="Kieser H."/>
            <person name="Harper D."/>
            <person name="Bateman A."/>
            <person name="Brown S."/>
            <person name="Chandra G."/>
            <person name="Chen C.W."/>
            <person name="Collins M."/>
            <person name="Cronin A."/>
            <person name="Fraser A."/>
            <person name="Goble A."/>
            <person name="Hidalgo J."/>
            <person name="Hornsby T."/>
            <person name="Howarth S."/>
            <person name="Huang C.-H."/>
            <person name="Kieser T."/>
            <person name="Larke L."/>
            <person name="Murphy L.D."/>
            <person name="Oliver K."/>
            <person name="O'Neil S."/>
            <person name="Rabbinowitsch E."/>
            <person name="Rajandream M.A."/>
            <person name="Rutherford K.M."/>
            <person name="Rutter S."/>
            <person name="Seeger K."/>
            <person name="Saunders D."/>
            <person name="Sharp S."/>
            <person name="Squares R."/>
            <person name="Squares S."/>
            <person name="Taylor K."/>
            <person name="Warren T."/>
            <person name="Wietzorrek A."/>
            <person name="Woodward J.R."/>
            <person name="Barrell B.G."/>
            <person name="Parkhill J."/>
            <person name="Hopwood D.A."/>
        </authorList>
    </citation>
    <scope>NUCLEOTIDE SEQUENCE [LARGE SCALE GENOMIC DNA]</scope>
    <source>
        <strain>ATCC BAA-471 / A3(2) / M145</strain>
    </source>
</reference>
<reference key="2">
    <citation type="journal article" date="1999" name="Mol. Microbiol.">
        <title>Identification of microbial dimethylarginine dimethylaminohydrolase enzymes.</title>
        <authorList>
            <person name="Santa Maria J."/>
            <person name="Vallance P."/>
            <person name="Charles I.G."/>
            <person name="Leiper J.M."/>
        </authorList>
    </citation>
    <scope>FUNCTION</scope>
    <scope>CATALYTIC ACTIVITY</scope>
</reference>
<gene>
    <name type="primary">ddaH</name>
    <name type="ordered locus">SCO6718</name>
    <name type="ORF">SC5F2A.01c</name>
</gene>
<name>DDAH_STRCO</name>
<organism>
    <name type="scientific">Streptomyces coelicolor (strain ATCC BAA-471 / A3(2) / M145)</name>
    <dbReference type="NCBI Taxonomy" id="100226"/>
    <lineage>
        <taxon>Bacteria</taxon>
        <taxon>Bacillati</taxon>
        <taxon>Actinomycetota</taxon>
        <taxon>Actinomycetes</taxon>
        <taxon>Kitasatosporales</taxon>
        <taxon>Streptomycetaceae</taxon>
        <taxon>Streptomyces</taxon>
        <taxon>Streptomyces albidoflavus group</taxon>
    </lineage>
</organism>
<protein>
    <recommendedName>
        <fullName evidence="4">N(G),N(G)-dimethylarginine dimethylaminohydrolase</fullName>
        <shortName evidence="3">DDAH</shortName>
        <shortName evidence="3">Dimethylarginine dimethylaminohydrolase</shortName>
        <ecNumber evidence="2">3.5.3.18</ecNumber>
    </recommendedName>
    <alternativeName>
        <fullName evidence="4">Dimethylargininase</fullName>
    </alternativeName>
</protein>
<feature type="chain" id="PRO_0000171123" description="N(G),N(G)-dimethylarginine dimethylaminohydrolase">
    <location>
        <begin position="1"/>
        <end position="258"/>
    </location>
</feature>
<feature type="active site" description="Proton donor" evidence="1">
    <location>
        <position position="163"/>
    </location>
</feature>
<feature type="active site" description="Nucleophile" evidence="1">
    <location>
        <position position="248"/>
    </location>
</feature>
<feature type="binding site" evidence="1">
    <location>
        <position position="19"/>
    </location>
    <ligand>
        <name>substrate</name>
    </ligand>
</feature>
<feature type="binding site" evidence="1">
    <location>
        <position position="62"/>
    </location>
    <ligand>
        <name>substrate</name>
    </ligand>
</feature>
<feature type="binding site" evidence="1">
    <location>
        <begin position="67"/>
        <end position="68"/>
    </location>
    <ligand>
        <name>substrate</name>
    </ligand>
</feature>
<feature type="binding site" evidence="1">
    <location>
        <position position="87"/>
    </location>
    <ligand>
        <name>substrate</name>
    </ligand>
</feature>
<feature type="binding site" evidence="1">
    <location>
        <position position="133"/>
    </location>
    <ligand>
        <name>substrate</name>
    </ligand>
</feature>
<dbReference type="EC" id="3.5.3.18" evidence="2"/>
<dbReference type="EMBL" id="AL939129">
    <property type="protein sequence ID" value="CAB40668.1"/>
    <property type="molecule type" value="Genomic_DNA"/>
</dbReference>
<dbReference type="PIR" id="T35243">
    <property type="entry name" value="T35243"/>
</dbReference>
<dbReference type="RefSeq" id="NP_630791.1">
    <property type="nucleotide sequence ID" value="NC_003888.3"/>
</dbReference>
<dbReference type="RefSeq" id="WP_003972278.1">
    <property type="nucleotide sequence ID" value="NZ_VNID01000002.1"/>
</dbReference>
<dbReference type="SMR" id="Q9X7M4"/>
<dbReference type="STRING" id="100226.gene:17764376"/>
<dbReference type="PaxDb" id="100226-SCO6718"/>
<dbReference type="GeneID" id="91382397"/>
<dbReference type="KEGG" id="sco:SCO6718"/>
<dbReference type="PATRIC" id="fig|100226.15.peg.6825"/>
<dbReference type="eggNOG" id="COG1834">
    <property type="taxonomic scope" value="Bacteria"/>
</dbReference>
<dbReference type="HOGENOM" id="CLU_067923_1_0_11"/>
<dbReference type="InParanoid" id="Q9X7M4"/>
<dbReference type="OrthoDB" id="3196313at2"/>
<dbReference type="PhylomeDB" id="Q9X7M4"/>
<dbReference type="Proteomes" id="UP000001973">
    <property type="component" value="Chromosome"/>
</dbReference>
<dbReference type="GO" id="GO:0016597">
    <property type="term" value="F:amino acid binding"/>
    <property type="evidence" value="ECO:0000318"/>
    <property type="project" value="GO_Central"/>
</dbReference>
<dbReference type="GO" id="GO:0016403">
    <property type="term" value="F:dimethylargininase activity"/>
    <property type="evidence" value="ECO:0000318"/>
    <property type="project" value="GO_Central"/>
</dbReference>
<dbReference type="GO" id="GO:0006525">
    <property type="term" value="P:arginine metabolic process"/>
    <property type="evidence" value="ECO:0000318"/>
    <property type="project" value="GO_Central"/>
</dbReference>
<dbReference type="GO" id="GO:0000052">
    <property type="term" value="P:citrulline metabolic process"/>
    <property type="evidence" value="ECO:0000318"/>
    <property type="project" value="GO_Central"/>
</dbReference>
<dbReference type="GO" id="GO:0045429">
    <property type="term" value="P:positive regulation of nitric oxide biosynthetic process"/>
    <property type="evidence" value="ECO:0000318"/>
    <property type="project" value="GO_Central"/>
</dbReference>
<dbReference type="FunFam" id="3.75.10.10:FF:000004">
    <property type="entry name" value="N(G),N(G)-dimethylarginine dimethylaminohydrolase 1"/>
    <property type="match status" value="1"/>
</dbReference>
<dbReference type="Gene3D" id="3.75.10.10">
    <property type="entry name" value="L-arginine/glycine Amidinotransferase, Chain A"/>
    <property type="match status" value="1"/>
</dbReference>
<dbReference type="InterPro" id="IPR033199">
    <property type="entry name" value="DDAH-like"/>
</dbReference>
<dbReference type="NCBIfam" id="NF045660">
    <property type="entry name" value="DiMthArgaseDdahStm"/>
    <property type="match status" value="1"/>
</dbReference>
<dbReference type="PANTHER" id="PTHR12737:SF9">
    <property type="entry name" value="DIMETHYLARGININASE"/>
    <property type="match status" value="1"/>
</dbReference>
<dbReference type="PANTHER" id="PTHR12737">
    <property type="entry name" value="DIMETHYLARGININE DIMETHYLAMINOHYDROLASE"/>
    <property type="match status" value="1"/>
</dbReference>
<dbReference type="SUPFAM" id="SSF55909">
    <property type="entry name" value="Pentein"/>
    <property type="match status" value="1"/>
</dbReference>
<accession>Q9X7M4</accession>
<keyword id="KW-0378">Hydrolase</keyword>
<keyword id="KW-1185">Reference proteome</keyword>
<proteinExistence type="evidence at protein level"/>